<organism>
    <name type="scientific">Pseudomonas putida (strain W619)</name>
    <dbReference type="NCBI Taxonomy" id="390235"/>
    <lineage>
        <taxon>Bacteria</taxon>
        <taxon>Pseudomonadati</taxon>
        <taxon>Pseudomonadota</taxon>
        <taxon>Gammaproteobacteria</taxon>
        <taxon>Pseudomonadales</taxon>
        <taxon>Pseudomonadaceae</taxon>
        <taxon>Pseudomonas</taxon>
    </lineage>
</organism>
<gene>
    <name evidence="1" type="primary">rpmJ</name>
    <name type="ordered locus">PputW619_4728</name>
</gene>
<protein>
    <recommendedName>
        <fullName evidence="1">Large ribosomal subunit protein bL36</fullName>
    </recommendedName>
    <alternativeName>
        <fullName evidence="2">50S ribosomal protein L36</fullName>
    </alternativeName>
</protein>
<evidence type="ECO:0000255" key="1">
    <source>
        <dbReference type="HAMAP-Rule" id="MF_00251"/>
    </source>
</evidence>
<evidence type="ECO:0000305" key="2"/>
<comment type="similarity">
    <text evidence="1">Belongs to the bacterial ribosomal protein bL36 family.</text>
</comment>
<reference key="1">
    <citation type="submission" date="2008-02" db="EMBL/GenBank/DDBJ databases">
        <title>Complete sequence of Pseudomonas putida W619.</title>
        <authorList>
            <person name="Copeland A."/>
            <person name="Lucas S."/>
            <person name="Lapidus A."/>
            <person name="Barry K."/>
            <person name="Detter J.C."/>
            <person name="Glavina del Rio T."/>
            <person name="Dalin E."/>
            <person name="Tice H."/>
            <person name="Pitluck S."/>
            <person name="Chain P."/>
            <person name="Malfatti S."/>
            <person name="Shin M."/>
            <person name="Vergez L."/>
            <person name="Schmutz J."/>
            <person name="Larimer F."/>
            <person name="Land M."/>
            <person name="Hauser L."/>
            <person name="Kyrpides N."/>
            <person name="Kim E."/>
            <person name="Taghavi S."/>
            <person name="Vangronsveld D."/>
            <person name="van der Lelie D."/>
            <person name="Richardson P."/>
        </authorList>
    </citation>
    <scope>NUCLEOTIDE SEQUENCE [LARGE SCALE GENOMIC DNA]</scope>
    <source>
        <strain>W619</strain>
    </source>
</reference>
<accession>B1JAJ1</accession>
<sequence length="38" mass="4434">MKVRASVKKLCRNCKIIRREGVVRVICSAEPRHKQRQG</sequence>
<proteinExistence type="inferred from homology"/>
<keyword id="KW-0687">Ribonucleoprotein</keyword>
<keyword id="KW-0689">Ribosomal protein</keyword>
<name>RL36_PSEPW</name>
<dbReference type="EMBL" id="CP000949">
    <property type="protein sequence ID" value="ACA75204.1"/>
    <property type="molecule type" value="Genomic_DNA"/>
</dbReference>
<dbReference type="SMR" id="B1JAJ1"/>
<dbReference type="STRING" id="390235.PputW619_4728"/>
<dbReference type="KEGG" id="ppw:PputW619_4728"/>
<dbReference type="eggNOG" id="COG0257">
    <property type="taxonomic scope" value="Bacteria"/>
</dbReference>
<dbReference type="HOGENOM" id="CLU_135723_6_2_6"/>
<dbReference type="OrthoDB" id="9802520at2"/>
<dbReference type="GO" id="GO:0005737">
    <property type="term" value="C:cytoplasm"/>
    <property type="evidence" value="ECO:0007669"/>
    <property type="project" value="UniProtKB-ARBA"/>
</dbReference>
<dbReference type="GO" id="GO:1990904">
    <property type="term" value="C:ribonucleoprotein complex"/>
    <property type="evidence" value="ECO:0007669"/>
    <property type="project" value="UniProtKB-KW"/>
</dbReference>
<dbReference type="GO" id="GO:0005840">
    <property type="term" value="C:ribosome"/>
    <property type="evidence" value="ECO:0007669"/>
    <property type="project" value="UniProtKB-KW"/>
</dbReference>
<dbReference type="GO" id="GO:0003735">
    <property type="term" value="F:structural constituent of ribosome"/>
    <property type="evidence" value="ECO:0007669"/>
    <property type="project" value="InterPro"/>
</dbReference>
<dbReference type="GO" id="GO:0006412">
    <property type="term" value="P:translation"/>
    <property type="evidence" value="ECO:0007669"/>
    <property type="project" value="UniProtKB-UniRule"/>
</dbReference>
<dbReference type="HAMAP" id="MF_00251">
    <property type="entry name" value="Ribosomal_bL36"/>
    <property type="match status" value="1"/>
</dbReference>
<dbReference type="InterPro" id="IPR000473">
    <property type="entry name" value="Ribosomal_bL36"/>
</dbReference>
<dbReference type="InterPro" id="IPR035977">
    <property type="entry name" value="Ribosomal_bL36_sp"/>
</dbReference>
<dbReference type="NCBIfam" id="TIGR01022">
    <property type="entry name" value="rpmJ_bact"/>
    <property type="match status" value="1"/>
</dbReference>
<dbReference type="PANTHER" id="PTHR42888">
    <property type="entry name" value="50S RIBOSOMAL PROTEIN L36, CHLOROPLASTIC"/>
    <property type="match status" value="1"/>
</dbReference>
<dbReference type="PANTHER" id="PTHR42888:SF1">
    <property type="entry name" value="LARGE RIBOSOMAL SUBUNIT PROTEIN BL36C"/>
    <property type="match status" value="1"/>
</dbReference>
<dbReference type="Pfam" id="PF00444">
    <property type="entry name" value="Ribosomal_L36"/>
    <property type="match status" value="1"/>
</dbReference>
<dbReference type="SUPFAM" id="SSF57840">
    <property type="entry name" value="Ribosomal protein L36"/>
    <property type="match status" value="1"/>
</dbReference>
<dbReference type="PROSITE" id="PS00828">
    <property type="entry name" value="RIBOSOMAL_L36"/>
    <property type="match status" value="1"/>
</dbReference>
<feature type="chain" id="PRO_1000101059" description="Large ribosomal subunit protein bL36">
    <location>
        <begin position="1"/>
        <end position="38"/>
    </location>
</feature>